<sequence length="391" mass="44569">MTNNTKTITLNLGPQHPATHGVLRLILEMDGEVVNNAVPHIGLLHRGTEKLIEHKTYLQAIPYFDRLDYVSPMCQEHAFALAVESLLECEVPRRAQFIRVLFSELTRILNHTLNIGSQALDIGATTPLLWLFEEREKIMEFYEHVSGSRMHSNYFRPGGVAADLPEGLLEDIDKFIEQFPPKLHDIESLLNENRLWKQRLVDIGVASQKEAMDWGFSGPMLRGSGIAWDLRKSNPYDVYDEMDFKVPIGKNGDCYDRYFVRMLEMYESIKIIKQCIEKMPKGAVKTDDPKLTPPTRAKMKESMEAMIHHFKLYTEGYDVPAGETYKAVEAPKGEFGVYLYSQGGNRPYRCRIKAPGFAHLQGLDFMSKGHLMADVITIIATLDIVFGEIDR</sequence>
<reference key="1">
    <citation type="journal article" date="2007" name="Genome Res.">
        <title>Lateral gene transfer between obligate intracellular bacteria: evidence from the Rickettsia massiliae genome.</title>
        <authorList>
            <person name="Blanc G."/>
            <person name="Ogata H."/>
            <person name="Robert C."/>
            <person name="Audic S."/>
            <person name="Claverie J.-M."/>
            <person name="Raoult D."/>
        </authorList>
    </citation>
    <scope>NUCLEOTIDE SEQUENCE [LARGE SCALE GENOMIC DNA]</scope>
    <source>
        <strain>Mtu5</strain>
    </source>
</reference>
<evidence type="ECO:0000255" key="1">
    <source>
        <dbReference type="HAMAP-Rule" id="MF_01358"/>
    </source>
</evidence>
<evidence type="ECO:0000305" key="2"/>
<dbReference type="EC" id="7.1.1.-" evidence="1"/>
<dbReference type="EMBL" id="CP000683">
    <property type="protein sequence ID" value="ABV84711.1"/>
    <property type="status" value="ALT_INIT"/>
    <property type="molecule type" value="Genomic_DNA"/>
</dbReference>
<dbReference type="RefSeq" id="WP_041404971.1">
    <property type="nucleotide sequence ID" value="NC_009900.1"/>
</dbReference>
<dbReference type="SMR" id="A8F1C5"/>
<dbReference type="KEGG" id="rms:RMA_0501"/>
<dbReference type="HOGENOM" id="CLU_015134_1_2_5"/>
<dbReference type="Proteomes" id="UP000001311">
    <property type="component" value="Chromosome"/>
</dbReference>
<dbReference type="GO" id="GO:0005886">
    <property type="term" value="C:plasma membrane"/>
    <property type="evidence" value="ECO:0007669"/>
    <property type="project" value="UniProtKB-SubCell"/>
</dbReference>
<dbReference type="GO" id="GO:0051287">
    <property type="term" value="F:NAD binding"/>
    <property type="evidence" value="ECO:0007669"/>
    <property type="project" value="InterPro"/>
</dbReference>
<dbReference type="GO" id="GO:0050136">
    <property type="term" value="F:NADH:ubiquinone reductase (non-electrogenic) activity"/>
    <property type="evidence" value="ECO:0007669"/>
    <property type="project" value="UniProtKB-UniRule"/>
</dbReference>
<dbReference type="GO" id="GO:0048038">
    <property type="term" value="F:quinone binding"/>
    <property type="evidence" value="ECO:0007669"/>
    <property type="project" value="UniProtKB-KW"/>
</dbReference>
<dbReference type="FunFam" id="1.10.645.10:FF:000005">
    <property type="entry name" value="NADH-quinone oxidoreductase subunit D"/>
    <property type="match status" value="1"/>
</dbReference>
<dbReference type="Gene3D" id="1.10.645.10">
    <property type="entry name" value="Cytochrome-c3 Hydrogenase, chain B"/>
    <property type="match status" value="1"/>
</dbReference>
<dbReference type="HAMAP" id="MF_01358">
    <property type="entry name" value="NDH1_NuoD"/>
    <property type="match status" value="1"/>
</dbReference>
<dbReference type="InterPro" id="IPR001135">
    <property type="entry name" value="NADH_Q_OxRdtase_suD"/>
</dbReference>
<dbReference type="InterPro" id="IPR014029">
    <property type="entry name" value="NADH_UbQ_OxRdtase_49kDa_CS"/>
</dbReference>
<dbReference type="InterPro" id="IPR022885">
    <property type="entry name" value="NDH1_su_D/H"/>
</dbReference>
<dbReference type="InterPro" id="IPR029014">
    <property type="entry name" value="NiFe-Hase_large"/>
</dbReference>
<dbReference type="NCBIfam" id="TIGR01962">
    <property type="entry name" value="NuoD"/>
    <property type="match status" value="1"/>
</dbReference>
<dbReference type="NCBIfam" id="NF004739">
    <property type="entry name" value="PRK06075.1"/>
    <property type="match status" value="1"/>
</dbReference>
<dbReference type="PANTHER" id="PTHR11993:SF10">
    <property type="entry name" value="NADH DEHYDROGENASE [UBIQUINONE] IRON-SULFUR PROTEIN 2, MITOCHONDRIAL"/>
    <property type="match status" value="1"/>
</dbReference>
<dbReference type="PANTHER" id="PTHR11993">
    <property type="entry name" value="NADH-UBIQUINONE OXIDOREDUCTASE 49 KDA SUBUNIT"/>
    <property type="match status" value="1"/>
</dbReference>
<dbReference type="Pfam" id="PF00346">
    <property type="entry name" value="Complex1_49kDa"/>
    <property type="match status" value="1"/>
</dbReference>
<dbReference type="SUPFAM" id="SSF56762">
    <property type="entry name" value="HydB/Nqo4-like"/>
    <property type="match status" value="1"/>
</dbReference>
<dbReference type="PROSITE" id="PS00535">
    <property type="entry name" value="COMPLEX1_49K"/>
    <property type="match status" value="1"/>
</dbReference>
<keyword id="KW-0997">Cell inner membrane</keyword>
<keyword id="KW-1003">Cell membrane</keyword>
<keyword id="KW-0472">Membrane</keyword>
<keyword id="KW-0520">NAD</keyword>
<keyword id="KW-0874">Quinone</keyword>
<keyword id="KW-1278">Translocase</keyword>
<keyword id="KW-0813">Transport</keyword>
<keyword id="KW-0830">Ubiquinone</keyword>
<feature type="chain" id="PRO_0000357913" description="NADH-quinone oxidoreductase subunit D">
    <location>
        <begin position="1"/>
        <end position="391"/>
    </location>
</feature>
<gene>
    <name evidence="1" type="primary">nuoD</name>
    <name type="ordered locus">RMA_0501</name>
</gene>
<organism>
    <name type="scientific">Rickettsia massiliae (strain Mtu5)</name>
    <dbReference type="NCBI Taxonomy" id="416276"/>
    <lineage>
        <taxon>Bacteria</taxon>
        <taxon>Pseudomonadati</taxon>
        <taxon>Pseudomonadota</taxon>
        <taxon>Alphaproteobacteria</taxon>
        <taxon>Rickettsiales</taxon>
        <taxon>Rickettsiaceae</taxon>
        <taxon>Rickettsieae</taxon>
        <taxon>Rickettsia</taxon>
        <taxon>spotted fever group</taxon>
    </lineage>
</organism>
<proteinExistence type="inferred from homology"/>
<protein>
    <recommendedName>
        <fullName evidence="1">NADH-quinone oxidoreductase subunit D</fullName>
        <ecNumber evidence="1">7.1.1.-</ecNumber>
    </recommendedName>
    <alternativeName>
        <fullName evidence="1">NADH dehydrogenase I subunit D</fullName>
    </alternativeName>
    <alternativeName>
        <fullName evidence="1">NDH-1 subunit D</fullName>
    </alternativeName>
</protein>
<name>NUOD_RICM5</name>
<comment type="function">
    <text evidence="1">NDH-1 shuttles electrons from NADH, via FMN and iron-sulfur (Fe-S) centers, to quinones in the respiratory chain. The immediate electron acceptor for the enzyme in this species is believed to be ubiquinone. Couples the redox reaction to proton translocation (for every two electrons transferred, four hydrogen ions are translocated across the cytoplasmic membrane), and thus conserves the redox energy in a proton gradient.</text>
</comment>
<comment type="catalytic activity">
    <reaction evidence="1">
        <text>a quinone + NADH + 5 H(+)(in) = a quinol + NAD(+) + 4 H(+)(out)</text>
        <dbReference type="Rhea" id="RHEA:57888"/>
        <dbReference type="ChEBI" id="CHEBI:15378"/>
        <dbReference type="ChEBI" id="CHEBI:24646"/>
        <dbReference type="ChEBI" id="CHEBI:57540"/>
        <dbReference type="ChEBI" id="CHEBI:57945"/>
        <dbReference type="ChEBI" id="CHEBI:132124"/>
    </reaction>
</comment>
<comment type="subunit">
    <text evidence="1">NDH-1 is composed of 14 different subunits. Subunits NuoB, C, D, E, F, and G constitute the peripheral sector of the complex.</text>
</comment>
<comment type="subcellular location">
    <subcellularLocation>
        <location evidence="1">Cell inner membrane</location>
        <topology evidence="1">Peripheral membrane protein</topology>
        <orientation evidence="1">Cytoplasmic side</orientation>
    </subcellularLocation>
</comment>
<comment type="similarity">
    <text evidence="1">Belongs to the complex I 49 kDa subunit family.</text>
</comment>
<comment type="sequence caution" evidence="2">
    <conflict type="erroneous initiation">
        <sequence resource="EMBL-CDS" id="ABV84711"/>
    </conflict>
</comment>
<accession>A8F1C5</accession>